<sequence length="115" mass="12504">MPMFIVNTNVPRASVPEGFLSELTQQLAQATGKPAQYIAVHVVPDQLMTFSGTNDPCALCSLHSIGKIGGAQNRNYSKLLCGLLSDRLHISPDRVYINYYDMNAANVGWNGSTFA</sequence>
<gene>
    <name evidence="10 12" type="primary">Mif</name>
</gene>
<dbReference type="EC" id="5.3.2.1" evidence="2 3 5"/>
<dbReference type="EC" id="5.3.3.12" evidence="2 3 5"/>
<dbReference type="EMBL" id="Z23048">
    <property type="protein sequence ID" value="CAA80583.1"/>
    <property type="molecule type" value="mRNA"/>
</dbReference>
<dbReference type="EMBL" id="U19825">
    <property type="protein sequence ID" value="AAA91637.1"/>
    <property type="molecule type" value="Genomic_DNA"/>
</dbReference>
<dbReference type="EMBL" id="L10613">
    <property type="protein sequence ID" value="AAA37693.1"/>
    <property type="molecule type" value="mRNA"/>
</dbReference>
<dbReference type="EMBL" id="U20156">
    <property type="protein sequence ID" value="AAA91638.1"/>
    <property type="molecule type" value="Genomic_DNA"/>
</dbReference>
<dbReference type="EMBL" id="L39357">
    <property type="protein sequence ID" value="AAA74321.1"/>
    <property type="molecule type" value="Genomic_DNA"/>
</dbReference>
<dbReference type="EMBL" id="BC024895">
    <property type="protein sequence ID" value="AAH24895.1"/>
    <property type="molecule type" value="mRNA"/>
</dbReference>
<dbReference type="EMBL" id="BC086928">
    <property type="protein sequence ID" value="AAH86928.1"/>
    <property type="molecule type" value="mRNA"/>
</dbReference>
<dbReference type="EMBL" id="L07607">
    <property type="protein sequence ID" value="AAA37111.1"/>
    <property type="molecule type" value="mRNA"/>
</dbReference>
<dbReference type="CCDS" id="CCDS23934.1"/>
<dbReference type="PIR" id="A44499">
    <property type="entry name" value="A44499"/>
</dbReference>
<dbReference type="RefSeq" id="NP_034928.1">
    <property type="nucleotide sequence ID" value="NM_010798.3"/>
</dbReference>
<dbReference type="PDB" id="1MFF">
    <property type="method" value="X-ray"/>
    <property type="resolution" value="2.00 A"/>
    <property type="chains" value="A/B/C=2-115"/>
</dbReference>
<dbReference type="PDB" id="1MFI">
    <property type="method" value="X-ray"/>
    <property type="resolution" value="1.80 A"/>
    <property type="chains" value="A/B/C=2-115"/>
</dbReference>
<dbReference type="PDB" id="2GDG">
    <property type="method" value="X-ray"/>
    <property type="resolution" value="1.45 A"/>
    <property type="chains" value="A/B/C=2-115"/>
</dbReference>
<dbReference type="PDBsum" id="1MFF"/>
<dbReference type="PDBsum" id="1MFI"/>
<dbReference type="PDBsum" id="2GDG"/>
<dbReference type="SMR" id="P34884"/>
<dbReference type="BioGRID" id="201418">
    <property type="interactions" value="11"/>
</dbReference>
<dbReference type="FunCoup" id="P34884">
    <property type="interactions" value="1049"/>
</dbReference>
<dbReference type="STRING" id="10090.ENSMUSP00000041149"/>
<dbReference type="BindingDB" id="P34884"/>
<dbReference type="ChEMBL" id="CHEMBL1926491"/>
<dbReference type="GlyGen" id="P34884">
    <property type="glycosylation" value="1 site, 1 O-linked glycan (1 site)"/>
</dbReference>
<dbReference type="iPTMnet" id="P34884"/>
<dbReference type="PhosphoSitePlus" id="P34884"/>
<dbReference type="SwissPalm" id="P34884"/>
<dbReference type="CPTAC" id="non-CPTAC-3842"/>
<dbReference type="jPOST" id="P34884"/>
<dbReference type="PaxDb" id="10090-ENSMUSP00000041149"/>
<dbReference type="PeptideAtlas" id="P34884"/>
<dbReference type="ProteomicsDB" id="292331"/>
<dbReference type="Pumba" id="P34884"/>
<dbReference type="TopDownProteomics" id="P34884"/>
<dbReference type="ABCD" id="P34884">
    <property type="antibodies" value="10 sequenced antibodies"/>
</dbReference>
<dbReference type="Antibodypedia" id="34865">
    <property type="antibodies" value="894 antibodies from 43 providers"/>
</dbReference>
<dbReference type="DNASU" id="17319"/>
<dbReference type="Ensembl" id="ENSMUST00000038169.8">
    <property type="protein sequence ID" value="ENSMUSP00000041149.7"/>
    <property type="gene ID" value="ENSMUSG00000033307.8"/>
</dbReference>
<dbReference type="GeneID" id="17319"/>
<dbReference type="KEGG" id="mmu:17319"/>
<dbReference type="UCSC" id="uc007ftc.1">
    <property type="organism name" value="mouse"/>
</dbReference>
<dbReference type="AGR" id="MGI:96982"/>
<dbReference type="CTD" id="4282"/>
<dbReference type="MGI" id="MGI:96982">
    <property type="gene designation" value="Mif"/>
</dbReference>
<dbReference type="VEuPathDB" id="HostDB:ENSMUSG00000033307"/>
<dbReference type="eggNOG" id="KOG1759">
    <property type="taxonomic scope" value="Eukaryota"/>
</dbReference>
<dbReference type="GeneTree" id="ENSGT00940000155608"/>
<dbReference type="HOGENOM" id="CLU_129906_1_1_1"/>
<dbReference type="InParanoid" id="P34884"/>
<dbReference type="OMA" id="YINFFDM"/>
<dbReference type="OrthoDB" id="255819at2759"/>
<dbReference type="PhylomeDB" id="P34884"/>
<dbReference type="TreeFam" id="TF313853"/>
<dbReference type="BRENDA" id="5.3.2.1">
    <property type="organism ID" value="3474"/>
</dbReference>
<dbReference type="Reactome" id="R-MMU-202733">
    <property type="pathway name" value="Cell surface interactions at the vascular wall"/>
</dbReference>
<dbReference type="Reactome" id="R-MMU-6798695">
    <property type="pathway name" value="Neutrophil degranulation"/>
</dbReference>
<dbReference type="BioGRID-ORCS" id="17319">
    <property type="hits" value="7 hits in 60 CRISPR screens"/>
</dbReference>
<dbReference type="ChiTaRS" id="Mif">
    <property type="organism name" value="mouse"/>
</dbReference>
<dbReference type="EvolutionaryTrace" id="P34884"/>
<dbReference type="PRO" id="PR:P34884"/>
<dbReference type="Proteomes" id="UP000000589">
    <property type="component" value="Chromosome 10"/>
</dbReference>
<dbReference type="RNAct" id="P34884">
    <property type="molecule type" value="protein"/>
</dbReference>
<dbReference type="Bgee" id="ENSMUSG00000033307">
    <property type="expression patterns" value="Expressed in endoderm of midgut and 298 other cell types or tissues"/>
</dbReference>
<dbReference type="ExpressionAtlas" id="P34884">
    <property type="expression patterns" value="baseline and differential"/>
</dbReference>
<dbReference type="GO" id="GO:0009986">
    <property type="term" value="C:cell surface"/>
    <property type="evidence" value="ECO:0007669"/>
    <property type="project" value="Ensembl"/>
</dbReference>
<dbReference type="GO" id="GO:0005829">
    <property type="term" value="C:cytosol"/>
    <property type="evidence" value="ECO:0007669"/>
    <property type="project" value="Ensembl"/>
</dbReference>
<dbReference type="GO" id="GO:0005615">
    <property type="term" value="C:extracellular space"/>
    <property type="evidence" value="ECO:0000314"/>
    <property type="project" value="BHF-UCL"/>
</dbReference>
<dbReference type="GO" id="GO:0043209">
    <property type="term" value="C:myelin sheath"/>
    <property type="evidence" value="ECO:0007005"/>
    <property type="project" value="UniProtKB"/>
</dbReference>
<dbReference type="GO" id="GO:0005654">
    <property type="term" value="C:nucleoplasm"/>
    <property type="evidence" value="ECO:0007669"/>
    <property type="project" value="Ensembl"/>
</dbReference>
<dbReference type="GO" id="GO:0005886">
    <property type="term" value="C:plasma membrane"/>
    <property type="evidence" value="ECO:0007669"/>
    <property type="project" value="Ensembl"/>
</dbReference>
<dbReference type="GO" id="GO:0042056">
    <property type="term" value="F:chemoattractant activity"/>
    <property type="evidence" value="ECO:0007669"/>
    <property type="project" value="Ensembl"/>
</dbReference>
<dbReference type="GO" id="GO:0005125">
    <property type="term" value="F:cytokine activity"/>
    <property type="evidence" value="ECO:0000314"/>
    <property type="project" value="BHF-UCL"/>
</dbReference>
<dbReference type="GO" id="GO:0005126">
    <property type="term" value="F:cytokine receptor binding"/>
    <property type="evidence" value="ECO:0007669"/>
    <property type="project" value="Ensembl"/>
</dbReference>
<dbReference type="GO" id="GO:0004167">
    <property type="term" value="F:dopachrome isomerase activity"/>
    <property type="evidence" value="ECO:0000250"/>
    <property type="project" value="UniProtKB"/>
</dbReference>
<dbReference type="GO" id="GO:0042802">
    <property type="term" value="F:identical protein binding"/>
    <property type="evidence" value="ECO:0007669"/>
    <property type="project" value="Ensembl"/>
</dbReference>
<dbReference type="GO" id="GO:0050178">
    <property type="term" value="F:phenylpyruvate tautomerase activity"/>
    <property type="evidence" value="ECO:0000315"/>
    <property type="project" value="MGI"/>
</dbReference>
<dbReference type="GO" id="GO:0002020">
    <property type="term" value="F:protease binding"/>
    <property type="evidence" value="ECO:0000353"/>
    <property type="project" value="BHF-UCL"/>
</dbReference>
<dbReference type="GO" id="GO:0007166">
    <property type="term" value="P:cell surface receptor signaling pathway"/>
    <property type="evidence" value="ECO:0007669"/>
    <property type="project" value="Ensembl"/>
</dbReference>
<dbReference type="GO" id="GO:0090398">
    <property type="term" value="P:cellular senescence"/>
    <property type="evidence" value="ECO:0000315"/>
    <property type="project" value="MGI"/>
</dbReference>
<dbReference type="GO" id="GO:0030330">
    <property type="term" value="P:DNA damage response, signal transduction by p53 class mediator"/>
    <property type="evidence" value="ECO:0000315"/>
    <property type="project" value="MGI"/>
</dbReference>
<dbReference type="GO" id="GO:0006954">
    <property type="term" value="P:inflammatory response"/>
    <property type="evidence" value="ECO:0007669"/>
    <property type="project" value="UniProtKB-KW"/>
</dbReference>
<dbReference type="GO" id="GO:0045087">
    <property type="term" value="P:innate immune response"/>
    <property type="evidence" value="ECO:0007669"/>
    <property type="project" value="UniProtKB-KW"/>
</dbReference>
<dbReference type="GO" id="GO:0043066">
    <property type="term" value="P:negative regulation of apoptotic process"/>
    <property type="evidence" value="ECO:0000314"/>
    <property type="project" value="BHF-UCL"/>
</dbReference>
<dbReference type="GO" id="GO:2000773">
    <property type="term" value="P:negative regulation of cellular senescence"/>
    <property type="evidence" value="ECO:0007669"/>
    <property type="project" value="Ensembl"/>
</dbReference>
<dbReference type="GO" id="GO:0043518">
    <property type="term" value="P:negative regulation of DNA damage response, signal transduction by p53 class mediator"/>
    <property type="evidence" value="ECO:0000314"/>
    <property type="project" value="BHF-UCL"/>
</dbReference>
<dbReference type="GO" id="GO:0010629">
    <property type="term" value="P:negative regulation of gene expression"/>
    <property type="evidence" value="ECO:0007669"/>
    <property type="project" value="Ensembl"/>
</dbReference>
<dbReference type="GO" id="GO:1902166">
    <property type="term" value="P:negative regulation of intrinsic apoptotic signaling pathway in response to DNA damage by p53 class mediator"/>
    <property type="evidence" value="ECO:0007669"/>
    <property type="project" value="Ensembl"/>
</dbReference>
<dbReference type="GO" id="GO:0010760">
    <property type="term" value="P:negative regulation of macrophage chemotaxis"/>
    <property type="evidence" value="ECO:0007669"/>
    <property type="project" value="Ensembl"/>
</dbReference>
<dbReference type="GO" id="GO:0002906">
    <property type="term" value="P:negative regulation of mature B cell apoptotic process"/>
    <property type="evidence" value="ECO:0000314"/>
    <property type="project" value="BHF-UCL"/>
</dbReference>
<dbReference type="GO" id="GO:0033033">
    <property type="term" value="P:negative regulation of myeloid cell apoptotic process"/>
    <property type="evidence" value="ECO:0000315"/>
    <property type="project" value="BHF-UCL"/>
</dbReference>
<dbReference type="GO" id="GO:0051248">
    <property type="term" value="P:negative regulation of protein metabolic process"/>
    <property type="evidence" value="ECO:0000314"/>
    <property type="project" value="BHF-UCL"/>
</dbReference>
<dbReference type="GO" id="GO:0002821">
    <property type="term" value="P:positive regulation of adaptive immune response"/>
    <property type="evidence" value="ECO:0000303"/>
    <property type="project" value="BHF-UCL"/>
</dbReference>
<dbReference type="GO" id="GO:0090238">
    <property type="term" value="P:positive regulation of arachidonate secretion"/>
    <property type="evidence" value="ECO:0000314"/>
    <property type="project" value="BHF-UCL"/>
</dbReference>
<dbReference type="GO" id="GO:0030890">
    <property type="term" value="P:positive regulation of B cell proliferation"/>
    <property type="evidence" value="ECO:0007669"/>
    <property type="project" value="Ensembl"/>
</dbReference>
<dbReference type="GO" id="GO:0141163">
    <property type="term" value="P:positive regulation of cAMP/PKA signal transduction"/>
    <property type="evidence" value="ECO:0007669"/>
    <property type="project" value="Ensembl"/>
</dbReference>
<dbReference type="GO" id="GO:2000343">
    <property type="term" value="P:positive regulation of chemokine (C-X-C motif) ligand 2 production"/>
    <property type="evidence" value="ECO:0000314"/>
    <property type="project" value="BHF-UCL"/>
</dbReference>
<dbReference type="GO" id="GO:0070374">
    <property type="term" value="P:positive regulation of ERK1 and ERK2 cascade"/>
    <property type="evidence" value="ECO:0000314"/>
    <property type="project" value="BHF-UCL"/>
</dbReference>
<dbReference type="GO" id="GO:0048146">
    <property type="term" value="P:positive regulation of fibroblast proliferation"/>
    <property type="evidence" value="ECO:0000314"/>
    <property type="project" value="BHF-UCL"/>
</dbReference>
<dbReference type="GO" id="GO:0031666">
    <property type="term" value="P:positive regulation of lipopolysaccharide-mediated signaling pathway"/>
    <property type="evidence" value="ECO:0000315"/>
    <property type="project" value="BHF-UCL"/>
</dbReference>
<dbReference type="GO" id="GO:0061081">
    <property type="term" value="P:positive regulation of myeloid leukocyte cytokine production involved in immune response"/>
    <property type="evidence" value="ECO:0000315"/>
    <property type="project" value="BHF-UCL"/>
</dbReference>
<dbReference type="GO" id="GO:0042327">
    <property type="term" value="P:positive regulation of phosphorylation"/>
    <property type="evidence" value="ECO:0007669"/>
    <property type="project" value="Ensembl"/>
</dbReference>
<dbReference type="GO" id="GO:0061078">
    <property type="term" value="P:positive regulation of prostaglandin secretion involved in immune response"/>
    <property type="evidence" value="ECO:0000315"/>
    <property type="project" value="BHF-UCL"/>
</dbReference>
<dbReference type="GO" id="GO:0032760">
    <property type="term" value="P:positive regulation of tumor necrosis factor production"/>
    <property type="evidence" value="ECO:0007669"/>
    <property type="project" value="Ensembl"/>
</dbReference>
<dbReference type="GO" id="GO:0001516">
    <property type="term" value="P:prostaglandin biosynthetic process"/>
    <property type="evidence" value="ECO:0007669"/>
    <property type="project" value="Ensembl"/>
</dbReference>
<dbReference type="GO" id="GO:0070207">
    <property type="term" value="P:protein homotrimerization"/>
    <property type="evidence" value="ECO:0007669"/>
    <property type="project" value="Ensembl"/>
</dbReference>
<dbReference type="GO" id="GO:0042127">
    <property type="term" value="P:regulation of cell population proliferation"/>
    <property type="evidence" value="ECO:0000315"/>
    <property type="project" value="MGI"/>
</dbReference>
<dbReference type="FunFam" id="3.30.429.10:FF:000001">
    <property type="entry name" value="Macrophage migration inhibitory factor"/>
    <property type="match status" value="1"/>
</dbReference>
<dbReference type="Gene3D" id="3.30.429.10">
    <property type="entry name" value="Macrophage Migration Inhibitory Factor"/>
    <property type="match status" value="1"/>
</dbReference>
<dbReference type="InterPro" id="IPR001398">
    <property type="entry name" value="Macrophage_inhib_fac"/>
</dbReference>
<dbReference type="InterPro" id="IPR019829">
    <property type="entry name" value="Macrophage_inhib_fac_CS"/>
</dbReference>
<dbReference type="InterPro" id="IPR014347">
    <property type="entry name" value="Tautomerase/MIF_sf"/>
</dbReference>
<dbReference type="PANTHER" id="PTHR11954">
    <property type="entry name" value="D-DOPACHROME DECARBOXYLASE"/>
    <property type="match status" value="1"/>
</dbReference>
<dbReference type="PANTHER" id="PTHR11954:SF6">
    <property type="entry name" value="MACROPHAGE MIGRATION INHIBITORY FACTOR"/>
    <property type="match status" value="1"/>
</dbReference>
<dbReference type="Pfam" id="PF01187">
    <property type="entry name" value="MIF"/>
    <property type="match status" value="1"/>
</dbReference>
<dbReference type="SUPFAM" id="SSF55331">
    <property type="entry name" value="Tautomerase/MIF"/>
    <property type="match status" value="1"/>
</dbReference>
<dbReference type="PROSITE" id="PS01158">
    <property type="entry name" value="MIF"/>
    <property type="match status" value="1"/>
</dbReference>
<keyword id="KW-0002">3D-structure</keyword>
<keyword id="KW-0007">Acetylation</keyword>
<keyword id="KW-0202">Cytokine</keyword>
<keyword id="KW-0963">Cytoplasm</keyword>
<keyword id="KW-0903">Direct protein sequencing</keyword>
<keyword id="KW-0391">Immunity</keyword>
<keyword id="KW-0395">Inflammatory response</keyword>
<keyword id="KW-0399">Innate immunity</keyword>
<keyword id="KW-0413">Isomerase</keyword>
<keyword id="KW-1185">Reference proteome</keyword>
<keyword id="KW-0964">Secreted</keyword>
<reference key="1">
    <citation type="journal article" date="1993" name="Nature">
        <title>MIF is a pituitary-derived cytokine that potentiates lethal endotoxaemia.</title>
        <authorList>
            <person name="Bernhagen J."/>
            <person name="Calandra T."/>
            <person name="Mitchell R.A."/>
            <person name="Martin S.B."/>
            <person name="Tracey K.J."/>
            <person name="Voelter W."/>
            <person name="Manogue K.R."/>
            <person name="Cerami A."/>
            <person name="Bucala R."/>
        </authorList>
    </citation>
    <scope>NUCLEOTIDE SEQUENCE [MRNA]</scope>
    <scope>PROTEIN SEQUENCE OF 2-28</scope>
    <source>
        <tissue>Pituitary</tissue>
    </source>
</reference>
<reference key="2">
    <citation type="journal article" date="1992" name="Mol. Cell. Biol.">
        <title>Growth factor-induced delayed early response genes.</title>
        <authorList>
            <person name="Lanahan A.A."/>
            <person name="Williams J.B."/>
            <person name="Sanders L.K."/>
            <person name="Nathans D."/>
        </authorList>
    </citation>
    <scope>NUCLEOTIDE SEQUENCE [MRNA]</scope>
    <source>
        <strain>BALB/cJ</strain>
    </source>
</reference>
<reference key="3">
    <citation type="journal article" date="1993" name="Proc. Natl. Acad. Sci. U.S.A.">
        <title>Molecular cloning and functional expression of a cDNA encoding glycosylation-inhibiting factor.</title>
        <authorList>
            <person name="Mikayama T."/>
            <person name="Nakano T."/>
            <person name="Gomi H."/>
            <person name="Nakagawa Y."/>
            <person name="Liu Y.C."/>
            <person name="Iwamatsu A."/>
            <person name="Weiser W.Y."/>
            <person name="Ishizaka K."/>
            <person name="Sato M."/>
            <person name="Ishii Y."/>
        </authorList>
    </citation>
    <scope>NUCLEOTIDE SEQUENCE [MRNA]</scope>
    <scope>SUBCELLULAR LOCATION</scope>
</reference>
<reference key="4">
    <citation type="journal article" date="1995" name="J. Immunol.">
        <title>Cloning and characterization of the gene for mouse macrophage migration inhibitory factor (MIF).</title>
        <authorList>
            <person name="Mitchell R."/>
            <person name="Bacher M."/>
            <person name="Bernhagen J."/>
            <person name="Pushkarskaya T."/>
            <person name="Seldin M.F."/>
            <person name="Bucala R."/>
        </authorList>
    </citation>
    <scope>NUCLEOTIDE SEQUENCE [GENOMIC DNA]</scope>
    <source>
        <strain>129/Sv</strain>
    </source>
</reference>
<reference key="5">
    <citation type="journal article" date="1995" name="Genomics">
        <title>Structural characterization and chromosomal location of the mouse macrophage migration inhibitory factor gene and pseudogenes.</title>
        <authorList>
            <person name="Bozza M."/>
            <person name="Kolakowski L.F. Jr."/>
            <person name="Jenkins N.A."/>
            <person name="Gilbert D.J."/>
            <person name="Copeland N.G."/>
            <person name="David J.R."/>
            <person name="Gerard C."/>
        </authorList>
    </citation>
    <scope>NUCLEOTIDE SEQUENCE [GENOMIC DNA]</scope>
    <source>
        <strain>129/Sv</strain>
    </source>
</reference>
<reference key="6">
    <citation type="journal article" date="1995" name="Genomics">
        <title>Genomic cloning of mouse MIF (macrophage inhibitory factor) and genetic mapping of the human and mouse expressed gene and nine mouse pseudogenes.</title>
        <authorList>
            <person name="Kozak C.A."/>
            <person name="Adamson M.C."/>
            <person name="Buckler C.E."/>
            <person name="Segovia L."/>
            <person name="Paralkar V."/>
            <person name="Wistow G."/>
        </authorList>
    </citation>
    <scope>NUCLEOTIDE SEQUENCE [GENOMIC DNA]</scope>
    <source>
        <strain>129/Sv</strain>
    </source>
</reference>
<reference key="7">
    <citation type="journal article" date="2004" name="Genome Res.">
        <title>The status, quality, and expansion of the NIH full-length cDNA project: the Mammalian Gene Collection (MGC).</title>
        <authorList>
            <consortium name="The MGC Project Team"/>
        </authorList>
    </citation>
    <scope>NUCLEOTIDE SEQUENCE [LARGE SCALE MRNA]</scope>
    <source>
        <strain>FVB/N</strain>
        <tissue>Kidney</tissue>
        <tissue>Mammary gland</tissue>
    </source>
</reference>
<reference key="8">
    <citation type="submission" date="2007-03" db="UniProtKB">
        <authorList>
            <person name="Lubec G."/>
            <person name="Klug S."/>
        </authorList>
    </citation>
    <scope>PROTEIN SEQUENCE OF 2-12</scope>
    <scope>IDENTIFICATION BY MASS SPECTROMETRY</scope>
    <source>
        <tissue>Hippocampus</tissue>
    </source>
</reference>
<reference key="9">
    <citation type="journal article" date="1993" name="Proc. Natl. Acad. Sci. U.S.A.">
        <title>A macrophage migration inhibitory factor is expressed in the differentiating cells of the eye lens.</title>
        <authorList>
            <person name="Wistow G.J."/>
            <person name="Shaughnessy M."/>
            <person name="Lee D.C."/>
            <person name="Hodin J."/>
            <person name="Zelenka P.S."/>
        </authorList>
    </citation>
    <scope>NUCLEOTIDE SEQUENCE [MRNA] OF 6-115</scope>
    <source>
        <tissue>Lens</tissue>
    </source>
</reference>
<reference key="10">
    <citation type="journal article" date="1994" name="Biochemistry">
        <title>Purification, bioactivity, and secondary structure analysis of mouse and human macrophage migration inhibitory factor (MIF).</title>
        <authorList>
            <person name="Bernhagen J."/>
            <person name="Mitchell R.A."/>
            <person name="Calandra T."/>
            <person name="Voelter W."/>
            <person name="Cerami A."/>
            <person name="Bucala R."/>
        </authorList>
    </citation>
    <scope>CHARACTERIZATION</scope>
</reference>
<reference key="11">
    <citation type="journal article" date="2007" name="J. Biol. Chem.">
        <title>Alternative chemical modifications reverse the binding orientation of a pharmacophore scaffold in the active site of macrophage migration inhibitory factor.</title>
        <authorList>
            <person name="Crichlow G.V."/>
            <person name="Cheng K.F."/>
            <person name="Dabideen D."/>
            <person name="Ochani M."/>
            <person name="Aljabari B."/>
            <person name="Pavlov V.A."/>
            <person name="Miller E.J."/>
            <person name="Lolis E."/>
            <person name="Al-Abed Y."/>
        </authorList>
    </citation>
    <scope>SUBCELLULAR LOCATION</scope>
    <scope>ROLE OF TAUTOMERASE INHIBITORS IN IMPROVED SURVIVAL IN CASE OF SEPSIS</scope>
</reference>
<reference key="12">
    <citation type="journal article" date="2009" name="Mol. Cell. Biol.">
        <title>A tautomerase-null macrophage migration-inhibitory factor (MIF) gene knock-in mouse model reveals that protein interactions and not enzymatic activity mediate MIF-dependent growth regulation.</title>
        <authorList>
            <person name="Fingerle-Rowson G."/>
            <person name="Kaleswarapu D.R."/>
            <person name="Schlander C."/>
            <person name="Kabgani N."/>
            <person name="Brocks T."/>
            <person name="Reinart N."/>
            <person name="Busch R."/>
            <person name="Schuetz A."/>
            <person name="Lue H."/>
            <person name="Du X."/>
            <person name="Liu A."/>
            <person name="Xiong H."/>
            <person name="Chen Y."/>
            <person name="Nemajerova A."/>
            <person name="Hallek M."/>
            <person name="Bernhagen J."/>
            <person name="Leng L."/>
            <person name="Bucala R."/>
        </authorList>
    </citation>
    <scope>INTERACTION WITH CD74; CXCR2 AND COPS5</scope>
    <scope>CATALYTIC ACTIVITY</scope>
    <scope>ACTIVE SITE</scope>
    <scope>MUTAGENESIS OF PRO-2</scope>
</reference>
<reference key="13">
    <citation type="journal article" date="2010" name="Cell">
        <title>A tissue-specific atlas of mouse protein phosphorylation and expression.</title>
        <authorList>
            <person name="Huttlin E.L."/>
            <person name="Jedrychowski M.P."/>
            <person name="Elias J.E."/>
            <person name="Goswami T."/>
            <person name="Rad R."/>
            <person name="Beausoleil S.A."/>
            <person name="Villen J."/>
            <person name="Haas W."/>
            <person name="Sowa M.E."/>
            <person name="Gygi S.P."/>
        </authorList>
    </citation>
    <scope>IDENTIFICATION BY MASS SPECTROMETRY [LARGE SCALE ANALYSIS]</scope>
    <source>
        <tissue>Brain</tissue>
        <tissue>Brown adipose tissue</tissue>
        <tissue>Heart</tissue>
        <tissue>Kidney</tissue>
        <tissue>Liver</tissue>
        <tissue>Lung</tissue>
        <tissue>Pancreas</tissue>
        <tissue>Spleen</tissue>
        <tissue>Testis</tissue>
    </source>
</reference>
<reference key="14">
    <citation type="journal article" date="2013" name="Mol. Cell">
        <title>SIRT5-mediated lysine desuccinylation impacts diverse metabolic pathways.</title>
        <authorList>
            <person name="Park J."/>
            <person name="Chen Y."/>
            <person name="Tishkoff D.X."/>
            <person name="Peng C."/>
            <person name="Tan M."/>
            <person name="Dai L."/>
            <person name="Xie Z."/>
            <person name="Zhang Y."/>
            <person name="Zwaans B.M."/>
            <person name="Skinner M.E."/>
            <person name="Lombard D.B."/>
            <person name="Zhao Y."/>
        </authorList>
    </citation>
    <scope>ACETYLATION [LARGE SCALE ANALYSIS] AT LYS-78</scope>
    <scope>SUCCINYLATION [LARGE SCALE ANALYSIS] AT LYS-78</scope>
    <scope>IDENTIFICATION BY MASS SPECTROMETRY [LARGE SCALE ANALYSIS]</scope>
    <source>
        <tissue>Embryonic fibroblast</tissue>
    </source>
</reference>
<reference key="15">
    <citation type="journal article" date="1999" name="Biochemistry">
        <title>Crystal structure of macrophage migration inhibitory factor complexed with (E)-2-fluoro-p-hydroxycinnamate at 1.8 A resolution: implications for enzymatic catalysis and inhibition.</title>
        <authorList>
            <person name="Taylor A.B."/>
            <person name="Johnson W.H. Jr."/>
            <person name="Czerwinski R.M."/>
            <person name="Li H.S."/>
            <person name="Hackert M.L."/>
            <person name="Whitman C.P."/>
        </authorList>
    </citation>
    <scope>X-RAY CRYSTALLOGRAPHY (1.8 ANGSTROMS)</scope>
</reference>
<reference key="16">
    <citation type="journal article" date="2000" name="Biochemistry">
        <title>Mechanism of the phenylpyruvate tautomerase activity of macrophage migration inhibitory factor: properties of the P1G, P1A, Y95F, and N97A mutants.</title>
        <authorList>
            <person name="Stamps S.L."/>
            <person name="Taylor A.B."/>
            <person name="Wang S.C."/>
            <person name="Hackert M.L."/>
            <person name="Whitman C.P."/>
        </authorList>
    </citation>
    <scope>X-RAY CRYSTALLOGRAPHY (2.0 ANGSTROMS)</scope>
    <scope>TAUTOMERASE ACTIVITY</scope>
    <scope>IDENTIFICATION BY MASS SPECTROMETRY</scope>
    <scope>CLEAVAGE OF INITIATOR METHIONINE</scope>
    <scope>ACTIVE SITE</scope>
    <scope>MUTAGENESIS OF PRO-2</scope>
</reference>
<reference key="17">
    <citation type="journal article" date="2006" name="Bioorg. Chem.">
        <title>Inactivation of the phenylpyruvate tautomerase activity of macrophage migration inhibitory factor by 2-oxo-4-phenyl-3-butynoate.</title>
        <authorList>
            <person name="Golubkov P.A."/>
            <person name="Johnson W.H. Jr."/>
            <person name="Czerwinski R.M."/>
            <person name="Person M.D."/>
            <person name="Wang S.C."/>
            <person name="Whitman C.P."/>
            <person name="Hackert M.L."/>
        </authorList>
    </citation>
    <scope>X-RAY CRYSTALLOGRAPHY (1.45 ANGSTROMS) IN COMPLEX WITH INHIBITOR</scope>
    <scope>FUNCTION</scope>
    <scope>CATALYTIC ACTIVITY</scope>
    <scope>IDENTIFICATION BY MASS SPECTROMETRY</scope>
    <scope>SUBUNIT</scope>
</reference>
<proteinExistence type="evidence at protein level"/>
<accession>P34884</accession>
<name>MIF_MOUSE</name>
<comment type="function">
    <text evidence="1 2 3 5">Pro-inflammatory cytokine involved in the innate immune response to bacterial pathogens (By similarity). The expression of MIF at sites of inflammation suggests a role as mediator in regulating the function of macrophages in host defense (By similarity). Counteracts the anti-inflammatory activity of glucocorticoids (By similarity). Has phenylpyruvate tautomerase and dopachrome tautomerase activity (in vitro), but the physiological substrate is not known (PubMed:10933783, PubMed:16780921, PubMed:19188446). It is not clear whether the tautomerase activity has any physiological relevance, and whether it is important for cytokine activity (PubMed:10933783, PubMed:16780921, PubMed:19188446).</text>
</comment>
<comment type="catalytic activity">
    <reaction evidence="2 3 5">
        <text>3-phenylpyruvate = enol-phenylpyruvate</text>
        <dbReference type="Rhea" id="RHEA:17097"/>
        <dbReference type="ChEBI" id="CHEBI:16815"/>
        <dbReference type="ChEBI" id="CHEBI:18005"/>
        <dbReference type="EC" id="5.3.2.1"/>
    </reaction>
</comment>
<comment type="catalytic activity">
    <reaction evidence="2 3 5">
        <text>L-dopachrome = 5,6-dihydroxyindole-2-carboxylate</text>
        <dbReference type="Rhea" id="RHEA:13041"/>
        <dbReference type="ChEBI" id="CHEBI:16875"/>
        <dbReference type="ChEBI" id="CHEBI:57509"/>
        <dbReference type="EC" id="5.3.3.12"/>
    </reaction>
</comment>
<comment type="subunit">
    <text evidence="1 3 5">Homotrimer (PubMed:16780921). Interacts with CD74 and CXCR2 extracellular domain and COPS5 (PubMed:19188446). Interacts with the USO1 and BNIPL (By similarity).</text>
</comment>
<comment type="subcellular location">
    <subcellularLocation>
        <location evidence="4 6">Secreted</location>
    </subcellularLocation>
    <subcellularLocation>
        <location evidence="1">Cytoplasm</location>
    </subcellularLocation>
    <text evidence="1">Does not have a cleavable signal sequence and is secreted via a specialized, non-classical pathway. Secreted by macrophages upon stimulation by bacterial lipopolysaccharide (LPS), or by M.tuberculosis antigens (By similarity).</text>
</comment>
<comment type="similarity">
    <text evidence="11">Belongs to the MIF family.</text>
</comment>
<organism>
    <name type="scientific">Mus musculus</name>
    <name type="common">Mouse</name>
    <dbReference type="NCBI Taxonomy" id="10090"/>
    <lineage>
        <taxon>Eukaryota</taxon>
        <taxon>Metazoa</taxon>
        <taxon>Chordata</taxon>
        <taxon>Craniata</taxon>
        <taxon>Vertebrata</taxon>
        <taxon>Euteleostomi</taxon>
        <taxon>Mammalia</taxon>
        <taxon>Eutheria</taxon>
        <taxon>Euarchontoglires</taxon>
        <taxon>Glires</taxon>
        <taxon>Rodentia</taxon>
        <taxon>Myomorpha</taxon>
        <taxon>Muroidea</taxon>
        <taxon>Muridae</taxon>
        <taxon>Murinae</taxon>
        <taxon>Mus</taxon>
        <taxon>Mus</taxon>
    </lineage>
</organism>
<protein>
    <recommendedName>
        <fullName>Macrophage migration inhibitory factor</fullName>
        <shortName>MIF</shortName>
        <ecNumber evidence="2 3 5">5.3.2.1</ecNumber>
    </recommendedName>
    <alternativeName>
        <fullName>Delayed early response protein 6</fullName>
        <shortName>DER6</shortName>
    </alternativeName>
    <alternativeName>
        <fullName evidence="9">Glycosylation-inhibiting factor</fullName>
        <shortName evidence="9">GIF</shortName>
    </alternativeName>
    <alternativeName>
        <fullName>L-dopachrome isomerase</fullName>
    </alternativeName>
    <alternativeName>
        <fullName>L-dopachrome tautomerase</fullName>
        <ecNumber evidence="2 3 5">5.3.3.12</ecNumber>
    </alternativeName>
    <alternativeName>
        <fullName>Phenylpyruvate tautomerase</fullName>
    </alternativeName>
</protein>
<evidence type="ECO:0000250" key="1">
    <source>
        <dbReference type="UniProtKB" id="P14174"/>
    </source>
</evidence>
<evidence type="ECO:0000269" key="2">
    <source>
    </source>
</evidence>
<evidence type="ECO:0000269" key="3">
    <source>
    </source>
</evidence>
<evidence type="ECO:0000269" key="4">
    <source>
    </source>
</evidence>
<evidence type="ECO:0000269" key="5">
    <source>
    </source>
</evidence>
<evidence type="ECO:0000269" key="6">
    <source>
    </source>
</evidence>
<evidence type="ECO:0000269" key="7">
    <source>
    </source>
</evidence>
<evidence type="ECO:0000269" key="8">
    <source ref="8"/>
</evidence>
<evidence type="ECO:0000303" key="9">
    <source>
    </source>
</evidence>
<evidence type="ECO:0000303" key="10">
    <source>
    </source>
</evidence>
<evidence type="ECO:0000305" key="11"/>
<evidence type="ECO:0000312" key="12">
    <source>
        <dbReference type="MGI" id="MGI:96982"/>
    </source>
</evidence>
<evidence type="ECO:0007744" key="13">
    <source>
    </source>
</evidence>
<evidence type="ECO:0007829" key="14">
    <source>
        <dbReference type="PDB" id="2GDG"/>
    </source>
</evidence>
<feature type="initiator methionine" description="Removed" evidence="2 7 8">
    <location>
        <position position="1"/>
    </location>
</feature>
<feature type="chain" id="PRO_0000158066" description="Macrophage migration inhibitory factor">
    <location>
        <begin position="2"/>
        <end position="115"/>
    </location>
</feature>
<feature type="active site" description="Proton acceptor; via imino nitrogen" evidence="2 5">
    <location>
        <position position="2"/>
    </location>
</feature>
<feature type="binding site" evidence="3">
    <location>
        <position position="33"/>
    </location>
    <ligand>
        <name>substrate</name>
    </ligand>
</feature>
<feature type="binding site" evidence="1">
    <location>
        <position position="65"/>
    </location>
    <ligand>
        <name>substrate</name>
    </ligand>
</feature>
<feature type="binding site" evidence="3">
    <location>
        <position position="98"/>
    </location>
    <ligand>
        <name>substrate</name>
    </ligand>
</feature>
<feature type="modified residue" description="N6-acetyllysine; alternate" evidence="13">
    <location>
        <position position="78"/>
    </location>
</feature>
<feature type="modified residue" description="N6-succinyllysine; alternate" evidence="13">
    <location>
        <position position="78"/>
    </location>
</feature>
<feature type="mutagenesis site" description="Loss of tautomerase activity, reduced activation of intracellular signaling pathways, and reduced interaction with CXCR2 and COPS5." evidence="2 5">
    <original>P</original>
    <variation>G</variation>
    <location>
        <position position="2"/>
    </location>
</feature>
<feature type="strand" evidence="14">
    <location>
        <begin position="3"/>
        <end position="10"/>
    </location>
</feature>
<feature type="helix" evidence="14">
    <location>
        <begin position="12"/>
        <end position="14"/>
    </location>
</feature>
<feature type="helix" evidence="14">
    <location>
        <begin position="19"/>
        <end position="31"/>
    </location>
</feature>
<feature type="helix" evidence="14">
    <location>
        <begin position="35"/>
        <end position="37"/>
    </location>
</feature>
<feature type="strand" evidence="14">
    <location>
        <begin position="39"/>
        <end position="43"/>
    </location>
</feature>
<feature type="strand" evidence="14">
    <location>
        <begin position="47"/>
        <end position="50"/>
    </location>
</feature>
<feature type="strand" evidence="14">
    <location>
        <begin position="58"/>
        <end position="66"/>
    </location>
</feature>
<feature type="helix" evidence="14">
    <location>
        <begin position="70"/>
        <end position="88"/>
    </location>
</feature>
<feature type="helix" evidence="14">
    <location>
        <begin position="92"/>
        <end position="94"/>
    </location>
</feature>
<feature type="strand" evidence="14">
    <location>
        <begin position="95"/>
        <end position="101"/>
    </location>
</feature>
<feature type="helix" evidence="14">
    <location>
        <begin position="104"/>
        <end position="106"/>
    </location>
</feature>
<feature type="strand" evidence="14">
    <location>
        <begin position="107"/>
        <end position="109"/>
    </location>
</feature>